<proteinExistence type="inferred from homology"/>
<feature type="chain" id="PRO_0000123290" description="Small ribosomal subunit protein uS11c">
    <location>
        <begin position="1"/>
        <end position="138"/>
    </location>
</feature>
<feature type="region of interest" description="Disordered" evidence="2">
    <location>
        <begin position="1"/>
        <end position="23"/>
    </location>
</feature>
<feature type="compositionally biased region" description="Basic residues" evidence="2">
    <location>
        <begin position="9"/>
        <end position="23"/>
    </location>
</feature>
<geneLocation type="chloroplast"/>
<comment type="subunit">
    <text evidence="1">Part of the 30S ribosomal subunit.</text>
</comment>
<comment type="subcellular location">
    <subcellularLocation>
        <location>Plastid</location>
        <location>Chloroplast</location>
    </subcellularLocation>
</comment>
<comment type="similarity">
    <text evidence="1">Belongs to the universal ribosomal protein uS11 family.</text>
</comment>
<evidence type="ECO:0000255" key="1">
    <source>
        <dbReference type="HAMAP-Rule" id="MF_01310"/>
    </source>
</evidence>
<evidence type="ECO:0000256" key="2">
    <source>
        <dbReference type="SAM" id="MobiDB-lite"/>
    </source>
</evidence>
<evidence type="ECO:0000303" key="3">
    <source>
    </source>
</evidence>
<organism>
    <name type="scientific">Arabidopsis thaliana</name>
    <name type="common">Mouse-ear cress</name>
    <dbReference type="NCBI Taxonomy" id="3702"/>
    <lineage>
        <taxon>Eukaryota</taxon>
        <taxon>Viridiplantae</taxon>
        <taxon>Streptophyta</taxon>
        <taxon>Embryophyta</taxon>
        <taxon>Tracheophyta</taxon>
        <taxon>Spermatophyta</taxon>
        <taxon>Magnoliopsida</taxon>
        <taxon>eudicotyledons</taxon>
        <taxon>Gunneridae</taxon>
        <taxon>Pentapetalae</taxon>
        <taxon>rosids</taxon>
        <taxon>malvids</taxon>
        <taxon>Brassicales</taxon>
        <taxon>Brassicaceae</taxon>
        <taxon>Camelineae</taxon>
        <taxon>Arabidopsis</taxon>
    </lineage>
</organism>
<accession>P56802</accession>
<name>RR11_ARATH</name>
<protein>
    <recommendedName>
        <fullName evidence="3">Small ribosomal subunit protein uS11c</fullName>
    </recommendedName>
    <alternativeName>
        <fullName evidence="1">30S ribosomal protein S11, chloroplastic</fullName>
    </alternativeName>
</protein>
<dbReference type="EMBL" id="AP000423">
    <property type="protein sequence ID" value="BAA84418.1"/>
    <property type="molecule type" value="Genomic_DNA"/>
</dbReference>
<dbReference type="RefSeq" id="NP_051091.1">
    <property type="nucleotide sequence ID" value="NC_000932.1"/>
</dbReference>
<dbReference type="SMR" id="P56802"/>
<dbReference type="BioGRID" id="29932">
    <property type="interactions" value="11"/>
</dbReference>
<dbReference type="FunCoup" id="P56802">
    <property type="interactions" value="1480"/>
</dbReference>
<dbReference type="STRING" id="3702.P56802"/>
<dbReference type="PaxDb" id="3702-ATCG00750.1"/>
<dbReference type="ProteomicsDB" id="226513"/>
<dbReference type="EnsemblPlants" id="ATCG00750.1">
    <property type="protein sequence ID" value="ATCG00750.1"/>
    <property type="gene ID" value="ATCG00750"/>
</dbReference>
<dbReference type="GeneID" id="844726"/>
<dbReference type="Gramene" id="ATCG00750.1">
    <property type="protein sequence ID" value="ATCG00750.1"/>
    <property type="gene ID" value="ATCG00750"/>
</dbReference>
<dbReference type="KEGG" id="ath:ArthCp056"/>
<dbReference type="Araport" id="ATCG00750"/>
<dbReference type="TAIR" id="ATCG00750">
    <property type="gene designation" value="RPS11"/>
</dbReference>
<dbReference type="eggNOG" id="KOG0408">
    <property type="taxonomic scope" value="Eukaryota"/>
</dbReference>
<dbReference type="HOGENOM" id="CLU_072439_5_1_1"/>
<dbReference type="InParanoid" id="P56802"/>
<dbReference type="OMA" id="TAVDQGM"/>
<dbReference type="PRO" id="PR:P56802"/>
<dbReference type="Proteomes" id="UP000006548">
    <property type="component" value="Chloroplast Pltd"/>
</dbReference>
<dbReference type="ExpressionAtlas" id="P56802">
    <property type="expression patterns" value="baseline and differential"/>
</dbReference>
<dbReference type="GO" id="GO:0009507">
    <property type="term" value="C:chloroplast"/>
    <property type="evidence" value="ECO:0007005"/>
    <property type="project" value="TAIR"/>
</dbReference>
<dbReference type="GO" id="GO:0009570">
    <property type="term" value="C:chloroplast stroma"/>
    <property type="evidence" value="ECO:0007005"/>
    <property type="project" value="TAIR"/>
</dbReference>
<dbReference type="GO" id="GO:0009536">
    <property type="term" value="C:plastid"/>
    <property type="evidence" value="ECO:0007005"/>
    <property type="project" value="TAIR"/>
</dbReference>
<dbReference type="GO" id="GO:1990904">
    <property type="term" value="C:ribonucleoprotein complex"/>
    <property type="evidence" value="ECO:0007669"/>
    <property type="project" value="UniProtKB-KW"/>
</dbReference>
<dbReference type="GO" id="GO:0005840">
    <property type="term" value="C:ribosome"/>
    <property type="evidence" value="ECO:0007669"/>
    <property type="project" value="UniProtKB-KW"/>
</dbReference>
<dbReference type="GO" id="GO:0003729">
    <property type="term" value="F:mRNA binding"/>
    <property type="evidence" value="ECO:0000314"/>
    <property type="project" value="TAIR"/>
</dbReference>
<dbReference type="GO" id="GO:0019843">
    <property type="term" value="F:rRNA binding"/>
    <property type="evidence" value="ECO:0007669"/>
    <property type="project" value="UniProtKB-UniRule"/>
</dbReference>
<dbReference type="GO" id="GO:0003735">
    <property type="term" value="F:structural constituent of ribosome"/>
    <property type="evidence" value="ECO:0007669"/>
    <property type="project" value="InterPro"/>
</dbReference>
<dbReference type="GO" id="GO:0006412">
    <property type="term" value="P:translation"/>
    <property type="evidence" value="ECO:0007669"/>
    <property type="project" value="UniProtKB-UniRule"/>
</dbReference>
<dbReference type="FunFam" id="3.30.420.80:FF:000003">
    <property type="entry name" value="30S ribosomal protein S11, chloroplastic"/>
    <property type="match status" value="1"/>
</dbReference>
<dbReference type="Gene3D" id="3.30.420.80">
    <property type="entry name" value="Ribosomal protein S11"/>
    <property type="match status" value="1"/>
</dbReference>
<dbReference type="HAMAP" id="MF_01310">
    <property type="entry name" value="Ribosomal_uS11"/>
    <property type="match status" value="1"/>
</dbReference>
<dbReference type="InterPro" id="IPR001971">
    <property type="entry name" value="Ribosomal_uS11"/>
</dbReference>
<dbReference type="InterPro" id="IPR019981">
    <property type="entry name" value="Ribosomal_uS11_bac-type"/>
</dbReference>
<dbReference type="InterPro" id="IPR018102">
    <property type="entry name" value="Ribosomal_uS11_CS"/>
</dbReference>
<dbReference type="InterPro" id="IPR036967">
    <property type="entry name" value="Ribosomal_uS11_sf"/>
</dbReference>
<dbReference type="NCBIfam" id="NF003698">
    <property type="entry name" value="PRK05309.1"/>
    <property type="match status" value="1"/>
</dbReference>
<dbReference type="NCBIfam" id="TIGR03632">
    <property type="entry name" value="uS11_bact"/>
    <property type="match status" value="1"/>
</dbReference>
<dbReference type="PANTHER" id="PTHR11759">
    <property type="entry name" value="40S RIBOSOMAL PROTEIN S14/30S RIBOSOMAL PROTEIN S11"/>
    <property type="match status" value="1"/>
</dbReference>
<dbReference type="Pfam" id="PF00411">
    <property type="entry name" value="Ribosomal_S11"/>
    <property type="match status" value="1"/>
</dbReference>
<dbReference type="PIRSF" id="PIRSF002131">
    <property type="entry name" value="Ribosomal_S11"/>
    <property type="match status" value="1"/>
</dbReference>
<dbReference type="SUPFAM" id="SSF53137">
    <property type="entry name" value="Translational machinery components"/>
    <property type="match status" value="1"/>
</dbReference>
<dbReference type="PROSITE" id="PS00054">
    <property type="entry name" value="RIBOSOMAL_S11"/>
    <property type="match status" value="1"/>
</dbReference>
<sequence length="138" mass="15024">MAKPILRIGSRKNTRSGSRKNVRRIPKGVIHVQASFNNTIVTVTDVRGRVISWSSAGTCGFRGTRRGTPFAAQTAAGNAIRAVVDQGMQRAEVRIKGPGLGRDAALRAIRRSGILLSFVRDVTPMPHNGCRPPKKRRV</sequence>
<keyword id="KW-0150">Chloroplast</keyword>
<keyword id="KW-0934">Plastid</keyword>
<keyword id="KW-1185">Reference proteome</keyword>
<keyword id="KW-0687">Ribonucleoprotein</keyword>
<keyword id="KW-0689">Ribosomal protein</keyword>
<keyword id="KW-0694">RNA-binding</keyword>
<keyword id="KW-0699">rRNA-binding</keyword>
<gene>
    <name evidence="1" type="primary">rps11</name>
    <name type="ordered locus">AtCg00750</name>
</gene>
<reference key="1">
    <citation type="journal article" date="1999" name="DNA Res.">
        <title>Complete structure of the chloroplast genome of Arabidopsis thaliana.</title>
        <authorList>
            <person name="Sato S."/>
            <person name="Nakamura Y."/>
            <person name="Kaneko T."/>
            <person name="Asamizu E."/>
            <person name="Tabata S."/>
        </authorList>
    </citation>
    <scope>NUCLEOTIDE SEQUENCE [LARGE SCALE GENOMIC DNA]</scope>
    <source>
        <strain>cv. Columbia</strain>
    </source>
</reference>
<reference key="2">
    <citation type="journal article" date="2023" name="Plant Cell">
        <title>An updated nomenclature for plant ribosomal protein genes.</title>
        <authorList>
            <person name="Scarpin M.R."/>
            <person name="Busche M."/>
            <person name="Martinez R.E."/>
            <person name="Harper L.C."/>
            <person name="Reiser L."/>
            <person name="Szakonyi D."/>
            <person name="Merchante C."/>
            <person name="Lan T."/>
            <person name="Xiong W."/>
            <person name="Mo B."/>
            <person name="Tang G."/>
            <person name="Chen X."/>
            <person name="Bailey-Serres J."/>
            <person name="Browning K.S."/>
            <person name="Brunkard J.O."/>
        </authorList>
    </citation>
    <scope>NOMENCLATURE</scope>
</reference>